<proteinExistence type="inferred from homology"/>
<evidence type="ECO:0000255" key="1">
    <source>
        <dbReference type="HAMAP-Rule" id="MF_01007"/>
    </source>
</evidence>
<organism>
    <name type="scientific">Streptococcus mutans serotype c (strain ATCC 700610 / UA159)</name>
    <dbReference type="NCBI Taxonomy" id="210007"/>
    <lineage>
        <taxon>Bacteria</taxon>
        <taxon>Bacillati</taxon>
        <taxon>Bacillota</taxon>
        <taxon>Bacilli</taxon>
        <taxon>Lactobacillales</taxon>
        <taxon>Streptococcaceae</taxon>
        <taxon>Streptococcus</taxon>
    </lineage>
</organism>
<comment type="function">
    <text evidence="1">Specifically methylates the N4 position of cytidine in position 1402 (C1402) of 16S rRNA.</text>
</comment>
<comment type="catalytic activity">
    <reaction evidence="1">
        <text>cytidine(1402) in 16S rRNA + S-adenosyl-L-methionine = N(4)-methylcytidine(1402) in 16S rRNA + S-adenosyl-L-homocysteine + H(+)</text>
        <dbReference type="Rhea" id="RHEA:42928"/>
        <dbReference type="Rhea" id="RHEA-COMP:10286"/>
        <dbReference type="Rhea" id="RHEA-COMP:10287"/>
        <dbReference type="ChEBI" id="CHEBI:15378"/>
        <dbReference type="ChEBI" id="CHEBI:57856"/>
        <dbReference type="ChEBI" id="CHEBI:59789"/>
        <dbReference type="ChEBI" id="CHEBI:74506"/>
        <dbReference type="ChEBI" id="CHEBI:82748"/>
        <dbReference type="EC" id="2.1.1.199"/>
    </reaction>
</comment>
<comment type="subcellular location">
    <subcellularLocation>
        <location evidence="1">Cytoplasm</location>
    </subcellularLocation>
</comment>
<comment type="similarity">
    <text evidence="1">Belongs to the methyltransferase superfamily. RsmH family.</text>
</comment>
<sequence>MTNDFHHITVLLHETIDMLDIKPDGIYVDATLGGAGHSECLLSKLGKEGHLYCFDQDQKAIDNAKIRLQQYVKTGQVSFIKDNFRHLKSRLADEGIYEIDGICYDLGVSSPQLDERERGFSYKKDAPLDMRMNQDAQLTAFDVVNTYDYRDLVRLFFKYGEDKFSKQIARKIESARKEKLIETTAELAEIIKSAKPAKELKKKGHPAKQIFQAIRIEVNDELGAAEESLTQALDLLALNGRIAVITFHSLEDRLTKQLFKEVTTLDVPKGLPFVPENLQPKFSLVNRKPILPNARELSENNRAHSAKLRVIQKIRN</sequence>
<accession>Q8DVM7</accession>
<name>RSMH_STRMU</name>
<dbReference type="EC" id="2.1.1.199" evidence="1"/>
<dbReference type="EMBL" id="AE014133">
    <property type="protein sequence ID" value="AAN58202.1"/>
    <property type="molecule type" value="Genomic_DNA"/>
</dbReference>
<dbReference type="RefSeq" id="NP_720896.1">
    <property type="nucleotide sequence ID" value="NC_004350.2"/>
</dbReference>
<dbReference type="RefSeq" id="WP_002262087.1">
    <property type="nucleotide sequence ID" value="NC_004350.2"/>
</dbReference>
<dbReference type="SMR" id="Q8DVM7"/>
<dbReference type="STRING" id="210007.SMU_453"/>
<dbReference type="KEGG" id="smu:SMU_453"/>
<dbReference type="PATRIC" id="fig|210007.7.peg.397"/>
<dbReference type="eggNOG" id="COG0275">
    <property type="taxonomic scope" value="Bacteria"/>
</dbReference>
<dbReference type="HOGENOM" id="CLU_038422_2_0_9"/>
<dbReference type="OrthoDB" id="9806637at2"/>
<dbReference type="PhylomeDB" id="Q8DVM7"/>
<dbReference type="Proteomes" id="UP000002512">
    <property type="component" value="Chromosome"/>
</dbReference>
<dbReference type="GO" id="GO:0005737">
    <property type="term" value="C:cytoplasm"/>
    <property type="evidence" value="ECO:0007669"/>
    <property type="project" value="UniProtKB-SubCell"/>
</dbReference>
<dbReference type="GO" id="GO:0071424">
    <property type="term" value="F:rRNA (cytosine-N4-)-methyltransferase activity"/>
    <property type="evidence" value="ECO:0007669"/>
    <property type="project" value="UniProtKB-UniRule"/>
</dbReference>
<dbReference type="GO" id="GO:0070475">
    <property type="term" value="P:rRNA base methylation"/>
    <property type="evidence" value="ECO:0007669"/>
    <property type="project" value="UniProtKB-UniRule"/>
</dbReference>
<dbReference type="FunFam" id="1.10.150.170:FF:000001">
    <property type="entry name" value="Ribosomal RNA small subunit methyltransferase H"/>
    <property type="match status" value="1"/>
</dbReference>
<dbReference type="Gene3D" id="1.10.150.170">
    <property type="entry name" value="Putative methyltransferase TM0872, insert domain"/>
    <property type="match status" value="1"/>
</dbReference>
<dbReference type="Gene3D" id="3.40.50.150">
    <property type="entry name" value="Vaccinia Virus protein VP39"/>
    <property type="match status" value="1"/>
</dbReference>
<dbReference type="HAMAP" id="MF_01007">
    <property type="entry name" value="16SrRNA_methyltr_H"/>
    <property type="match status" value="1"/>
</dbReference>
<dbReference type="InterPro" id="IPR002903">
    <property type="entry name" value="RsmH"/>
</dbReference>
<dbReference type="InterPro" id="IPR023397">
    <property type="entry name" value="SAM-dep_MeTrfase_MraW_recog"/>
</dbReference>
<dbReference type="InterPro" id="IPR029063">
    <property type="entry name" value="SAM-dependent_MTases_sf"/>
</dbReference>
<dbReference type="NCBIfam" id="TIGR00006">
    <property type="entry name" value="16S rRNA (cytosine(1402)-N(4))-methyltransferase RsmH"/>
    <property type="match status" value="1"/>
</dbReference>
<dbReference type="PANTHER" id="PTHR11265:SF0">
    <property type="entry name" value="12S RRNA N4-METHYLCYTIDINE METHYLTRANSFERASE"/>
    <property type="match status" value="1"/>
</dbReference>
<dbReference type="PANTHER" id="PTHR11265">
    <property type="entry name" value="S-ADENOSYL-METHYLTRANSFERASE MRAW"/>
    <property type="match status" value="1"/>
</dbReference>
<dbReference type="Pfam" id="PF01795">
    <property type="entry name" value="Methyltransf_5"/>
    <property type="match status" value="1"/>
</dbReference>
<dbReference type="PIRSF" id="PIRSF004486">
    <property type="entry name" value="MraW"/>
    <property type="match status" value="1"/>
</dbReference>
<dbReference type="SUPFAM" id="SSF81799">
    <property type="entry name" value="Putative methyltransferase TM0872, insert domain"/>
    <property type="match status" value="1"/>
</dbReference>
<dbReference type="SUPFAM" id="SSF53335">
    <property type="entry name" value="S-adenosyl-L-methionine-dependent methyltransferases"/>
    <property type="match status" value="1"/>
</dbReference>
<reference key="1">
    <citation type="journal article" date="2002" name="Proc. Natl. Acad. Sci. U.S.A.">
        <title>Genome sequence of Streptococcus mutans UA159, a cariogenic dental pathogen.</title>
        <authorList>
            <person name="Ajdic D.J."/>
            <person name="McShan W.M."/>
            <person name="McLaughlin R.E."/>
            <person name="Savic G."/>
            <person name="Chang J."/>
            <person name="Carson M.B."/>
            <person name="Primeaux C."/>
            <person name="Tian R."/>
            <person name="Kenton S."/>
            <person name="Jia H.G."/>
            <person name="Lin S.P."/>
            <person name="Qian Y."/>
            <person name="Li S."/>
            <person name="Zhu H."/>
            <person name="Najar F.Z."/>
            <person name="Lai H."/>
            <person name="White J."/>
            <person name="Roe B.A."/>
            <person name="Ferretti J.J."/>
        </authorList>
    </citation>
    <scope>NUCLEOTIDE SEQUENCE [LARGE SCALE GENOMIC DNA]</scope>
    <source>
        <strain>ATCC 700610 / UA159</strain>
    </source>
</reference>
<feature type="chain" id="PRO_0000108718" description="Ribosomal RNA small subunit methyltransferase H">
    <location>
        <begin position="1"/>
        <end position="316"/>
    </location>
</feature>
<feature type="binding site" evidence="1">
    <location>
        <begin position="35"/>
        <end position="37"/>
    </location>
    <ligand>
        <name>S-adenosyl-L-methionine</name>
        <dbReference type="ChEBI" id="CHEBI:59789"/>
    </ligand>
</feature>
<feature type="binding site" evidence="1">
    <location>
        <position position="55"/>
    </location>
    <ligand>
        <name>S-adenosyl-L-methionine</name>
        <dbReference type="ChEBI" id="CHEBI:59789"/>
    </ligand>
</feature>
<feature type="binding site" evidence="1">
    <location>
        <position position="84"/>
    </location>
    <ligand>
        <name>S-adenosyl-L-methionine</name>
        <dbReference type="ChEBI" id="CHEBI:59789"/>
    </ligand>
</feature>
<feature type="binding site" evidence="1">
    <location>
        <position position="105"/>
    </location>
    <ligand>
        <name>S-adenosyl-L-methionine</name>
        <dbReference type="ChEBI" id="CHEBI:59789"/>
    </ligand>
</feature>
<feature type="binding site" evidence="1">
    <location>
        <position position="112"/>
    </location>
    <ligand>
        <name>S-adenosyl-L-methionine</name>
        <dbReference type="ChEBI" id="CHEBI:59789"/>
    </ligand>
</feature>
<gene>
    <name evidence="1" type="primary">rsmH</name>
    <name type="synonym">mraW</name>
    <name type="ordered locus">SMU_453</name>
</gene>
<protein>
    <recommendedName>
        <fullName evidence="1">Ribosomal RNA small subunit methyltransferase H</fullName>
        <ecNumber evidence="1">2.1.1.199</ecNumber>
    </recommendedName>
    <alternativeName>
        <fullName evidence="1">16S rRNA m(4)C1402 methyltransferase</fullName>
    </alternativeName>
    <alternativeName>
        <fullName evidence="1">rRNA (cytosine-N(4)-)-methyltransferase RsmH</fullName>
    </alternativeName>
</protein>
<keyword id="KW-0963">Cytoplasm</keyword>
<keyword id="KW-0489">Methyltransferase</keyword>
<keyword id="KW-1185">Reference proteome</keyword>
<keyword id="KW-0698">rRNA processing</keyword>
<keyword id="KW-0949">S-adenosyl-L-methionine</keyword>
<keyword id="KW-0808">Transferase</keyword>